<protein>
    <recommendedName>
        <fullName evidence="1">Pyridoxine 5'-phosphate synthase</fullName>
        <shortName evidence="1">PNP synthase</shortName>
        <ecNumber evidence="1">2.6.99.2</ecNumber>
    </recommendedName>
</protein>
<organism>
    <name type="scientific">Campylobacter jejuni subsp. jejuni serotype O:2 (strain ATCC 700819 / NCTC 11168)</name>
    <dbReference type="NCBI Taxonomy" id="192222"/>
    <lineage>
        <taxon>Bacteria</taxon>
        <taxon>Pseudomonadati</taxon>
        <taxon>Campylobacterota</taxon>
        <taxon>Epsilonproteobacteria</taxon>
        <taxon>Campylobacterales</taxon>
        <taxon>Campylobacteraceae</taxon>
        <taxon>Campylobacter</taxon>
    </lineage>
</organism>
<comment type="function">
    <text evidence="1">Catalyzes the complicated ring closure reaction between the two acyclic compounds 1-deoxy-D-xylulose-5-phosphate (DXP) and 3-amino-2-oxopropyl phosphate (1-amino-acetone-3-phosphate or AAP) to form pyridoxine 5'-phosphate (PNP) and inorganic phosphate.</text>
</comment>
<comment type="catalytic activity">
    <reaction evidence="1">
        <text>3-amino-2-oxopropyl phosphate + 1-deoxy-D-xylulose 5-phosphate = pyridoxine 5'-phosphate + phosphate + 2 H2O + H(+)</text>
        <dbReference type="Rhea" id="RHEA:15265"/>
        <dbReference type="ChEBI" id="CHEBI:15377"/>
        <dbReference type="ChEBI" id="CHEBI:15378"/>
        <dbReference type="ChEBI" id="CHEBI:43474"/>
        <dbReference type="ChEBI" id="CHEBI:57279"/>
        <dbReference type="ChEBI" id="CHEBI:57792"/>
        <dbReference type="ChEBI" id="CHEBI:58589"/>
        <dbReference type="EC" id="2.6.99.2"/>
    </reaction>
</comment>
<comment type="pathway">
    <text evidence="1">Cofactor biosynthesis; pyridoxine 5'-phosphate biosynthesis; pyridoxine 5'-phosphate from D-erythrose 4-phosphate: step 5/5.</text>
</comment>
<comment type="subunit">
    <text evidence="1">Homooctamer; tetramer of dimers.</text>
</comment>
<comment type="subcellular location">
    <subcellularLocation>
        <location evidence="1">Cytoplasm</location>
    </subcellularLocation>
</comment>
<comment type="similarity">
    <text evidence="1">Belongs to the PNP synthase family.</text>
</comment>
<name>PDXJ_CAMJE</name>
<dbReference type="EC" id="2.6.99.2" evidence="1"/>
<dbReference type="EMBL" id="AL111168">
    <property type="protein sequence ID" value="CAL35353.1"/>
    <property type="molecule type" value="Genomic_DNA"/>
</dbReference>
<dbReference type="PIR" id="H81330">
    <property type="entry name" value="H81330"/>
</dbReference>
<dbReference type="RefSeq" id="WP_002853163.1">
    <property type="nucleotide sequence ID" value="NZ_SZUC01000001.1"/>
</dbReference>
<dbReference type="RefSeq" id="YP_002344629.1">
    <property type="nucleotide sequence ID" value="NC_002163.1"/>
</dbReference>
<dbReference type="PDB" id="3O6C">
    <property type="method" value="X-ray"/>
    <property type="resolution" value="1.87 A"/>
    <property type="chains" value="A=1-257"/>
</dbReference>
<dbReference type="PDB" id="3O6D">
    <property type="method" value="X-ray"/>
    <property type="resolution" value="1.95 A"/>
    <property type="chains" value="A=1-257"/>
</dbReference>
<dbReference type="PDBsum" id="3O6C"/>
<dbReference type="PDBsum" id="3O6D"/>
<dbReference type="SMR" id="Q9PN59"/>
<dbReference type="IntAct" id="Q9PN59">
    <property type="interactions" value="25"/>
</dbReference>
<dbReference type="STRING" id="192222.Cj1238"/>
<dbReference type="PaxDb" id="192222-Cj1238"/>
<dbReference type="EnsemblBacteria" id="CAL35353">
    <property type="protein sequence ID" value="CAL35353"/>
    <property type="gene ID" value="Cj1238"/>
</dbReference>
<dbReference type="GeneID" id="905529"/>
<dbReference type="KEGG" id="cje:Cj1238"/>
<dbReference type="PATRIC" id="fig|192222.6.peg.1220"/>
<dbReference type="eggNOG" id="COG0854">
    <property type="taxonomic scope" value="Bacteria"/>
</dbReference>
<dbReference type="HOGENOM" id="CLU_074563_0_0_7"/>
<dbReference type="OrthoDB" id="9806590at2"/>
<dbReference type="UniPathway" id="UPA00244">
    <property type="reaction ID" value="UER00313"/>
</dbReference>
<dbReference type="EvolutionaryTrace" id="Q9PN59"/>
<dbReference type="Proteomes" id="UP000000799">
    <property type="component" value="Chromosome"/>
</dbReference>
<dbReference type="GO" id="GO:0005829">
    <property type="term" value="C:cytosol"/>
    <property type="evidence" value="ECO:0007669"/>
    <property type="project" value="TreeGrafter"/>
</dbReference>
<dbReference type="GO" id="GO:0033856">
    <property type="term" value="F:pyridoxine 5'-phosphate synthase activity"/>
    <property type="evidence" value="ECO:0007669"/>
    <property type="project" value="UniProtKB-EC"/>
</dbReference>
<dbReference type="GO" id="GO:0008615">
    <property type="term" value="P:pyridoxine biosynthetic process"/>
    <property type="evidence" value="ECO:0007669"/>
    <property type="project" value="UniProtKB-UniRule"/>
</dbReference>
<dbReference type="CDD" id="cd00003">
    <property type="entry name" value="PNPsynthase"/>
    <property type="match status" value="1"/>
</dbReference>
<dbReference type="Gene3D" id="3.20.20.70">
    <property type="entry name" value="Aldolase class I"/>
    <property type="match status" value="1"/>
</dbReference>
<dbReference type="HAMAP" id="MF_00279">
    <property type="entry name" value="PdxJ"/>
    <property type="match status" value="1"/>
</dbReference>
<dbReference type="InterPro" id="IPR013785">
    <property type="entry name" value="Aldolase_TIM"/>
</dbReference>
<dbReference type="InterPro" id="IPR004569">
    <property type="entry name" value="PyrdxlP_synth_PdxJ"/>
</dbReference>
<dbReference type="InterPro" id="IPR036130">
    <property type="entry name" value="Pyridoxine-5'_phos_synth"/>
</dbReference>
<dbReference type="NCBIfam" id="TIGR00559">
    <property type="entry name" value="pdxJ"/>
    <property type="match status" value="1"/>
</dbReference>
<dbReference type="NCBIfam" id="NF003625">
    <property type="entry name" value="PRK05265.1-3"/>
    <property type="match status" value="1"/>
</dbReference>
<dbReference type="NCBIfam" id="NF003627">
    <property type="entry name" value="PRK05265.1-5"/>
    <property type="match status" value="1"/>
</dbReference>
<dbReference type="PANTHER" id="PTHR30456">
    <property type="entry name" value="PYRIDOXINE 5'-PHOSPHATE SYNTHASE"/>
    <property type="match status" value="1"/>
</dbReference>
<dbReference type="PANTHER" id="PTHR30456:SF0">
    <property type="entry name" value="PYRIDOXINE 5'-PHOSPHATE SYNTHASE"/>
    <property type="match status" value="1"/>
</dbReference>
<dbReference type="Pfam" id="PF03740">
    <property type="entry name" value="PdxJ"/>
    <property type="match status" value="1"/>
</dbReference>
<dbReference type="SUPFAM" id="SSF63892">
    <property type="entry name" value="Pyridoxine 5'-phosphate synthase"/>
    <property type="match status" value="1"/>
</dbReference>
<accession>Q9PN59</accession>
<accession>Q0P918</accession>
<feature type="chain" id="PRO_0000190111" description="Pyridoxine 5'-phosphate synthase">
    <location>
        <begin position="1"/>
        <end position="257"/>
    </location>
</feature>
<feature type="active site" description="Proton acceptor" evidence="1">
    <location>
        <position position="41"/>
    </location>
</feature>
<feature type="active site" description="Proton acceptor" evidence="1">
    <location>
        <position position="68"/>
    </location>
</feature>
<feature type="active site" description="Proton donor" evidence="1">
    <location>
        <position position="210"/>
    </location>
</feature>
<feature type="binding site" evidence="1">
    <location>
        <position position="6"/>
    </location>
    <ligand>
        <name>3-amino-2-oxopropyl phosphate</name>
        <dbReference type="ChEBI" id="CHEBI:57279"/>
    </ligand>
</feature>
<feature type="binding site" evidence="1">
    <location>
        <begin position="8"/>
        <end position="9"/>
    </location>
    <ligand>
        <name>1-deoxy-D-xylulose 5-phosphate</name>
        <dbReference type="ChEBI" id="CHEBI:57792"/>
    </ligand>
</feature>
<feature type="binding site" evidence="1">
    <location>
        <position position="17"/>
    </location>
    <ligand>
        <name>3-amino-2-oxopropyl phosphate</name>
        <dbReference type="ChEBI" id="CHEBI:57279"/>
    </ligand>
</feature>
<feature type="binding site" evidence="1">
    <location>
        <position position="43"/>
    </location>
    <ligand>
        <name>1-deoxy-D-xylulose 5-phosphate</name>
        <dbReference type="ChEBI" id="CHEBI:57792"/>
    </ligand>
</feature>
<feature type="binding site" evidence="1">
    <location>
        <position position="48"/>
    </location>
    <ligand>
        <name>1-deoxy-D-xylulose 5-phosphate</name>
        <dbReference type="ChEBI" id="CHEBI:57792"/>
    </ligand>
</feature>
<feature type="binding site" evidence="1">
    <location>
        <position position="98"/>
    </location>
    <ligand>
        <name>1-deoxy-D-xylulose 5-phosphate</name>
        <dbReference type="ChEBI" id="CHEBI:57792"/>
    </ligand>
</feature>
<feature type="binding site" evidence="1">
    <location>
        <position position="211"/>
    </location>
    <ligand>
        <name>3-amino-2-oxopropyl phosphate</name>
        <dbReference type="ChEBI" id="CHEBI:57279"/>
    </ligand>
</feature>
<feature type="binding site" evidence="1">
    <location>
        <begin position="232"/>
        <end position="233"/>
    </location>
    <ligand>
        <name>3-amino-2-oxopropyl phosphate</name>
        <dbReference type="ChEBI" id="CHEBI:57279"/>
    </ligand>
</feature>
<feature type="site" description="Transition state stabilizer" evidence="1">
    <location>
        <position position="147"/>
    </location>
</feature>
<feature type="strand" evidence="2">
    <location>
        <begin position="2"/>
        <end position="6"/>
    </location>
</feature>
<feature type="helix" evidence="2">
    <location>
        <begin position="8"/>
        <end position="17"/>
    </location>
</feature>
<feature type="helix" evidence="2">
    <location>
        <begin position="24"/>
        <end position="34"/>
    </location>
</feature>
<feature type="strand" evidence="2">
    <location>
        <begin position="35"/>
        <end position="41"/>
    </location>
</feature>
<feature type="strand" evidence="2">
    <location>
        <begin position="47"/>
        <end position="49"/>
    </location>
</feature>
<feature type="helix" evidence="2">
    <location>
        <begin position="51"/>
        <end position="60"/>
    </location>
</feature>
<feature type="strand" evidence="2">
    <location>
        <begin position="65"/>
        <end position="69"/>
    </location>
</feature>
<feature type="helix" evidence="2">
    <location>
        <begin position="73"/>
        <end position="82"/>
    </location>
</feature>
<feature type="strand" evidence="2">
    <location>
        <begin position="85"/>
        <end position="89"/>
    </location>
</feature>
<feature type="helix" evidence="2">
    <location>
        <begin position="94"/>
        <end position="96"/>
    </location>
</feature>
<feature type="strand" evidence="2">
    <location>
        <begin position="101"/>
        <end position="103"/>
    </location>
</feature>
<feature type="helix" evidence="2">
    <location>
        <begin position="110"/>
        <end position="119"/>
    </location>
</feature>
<feature type="strand" evidence="2">
    <location>
        <begin position="123"/>
        <end position="128"/>
    </location>
</feature>
<feature type="helix" evidence="2">
    <location>
        <begin position="132"/>
        <end position="140"/>
    </location>
</feature>
<feature type="strand" evidence="2">
    <location>
        <begin position="144"/>
        <end position="148"/>
    </location>
</feature>
<feature type="helix" evidence="2">
    <location>
        <begin position="151"/>
        <end position="161"/>
    </location>
</feature>
<feature type="helix" evidence="2">
    <location>
        <begin position="164"/>
        <end position="166"/>
    </location>
</feature>
<feature type="helix" evidence="2">
    <location>
        <begin position="172"/>
        <end position="174"/>
    </location>
</feature>
<feature type="helix" evidence="2">
    <location>
        <begin position="178"/>
        <end position="201"/>
    </location>
</feature>
<feature type="strand" evidence="2">
    <location>
        <begin position="205"/>
        <end position="208"/>
    </location>
</feature>
<feature type="turn" evidence="2">
    <location>
        <begin position="214"/>
        <end position="217"/>
    </location>
</feature>
<feature type="helix" evidence="2">
    <location>
        <begin position="218"/>
        <end position="221"/>
    </location>
</feature>
<feature type="strand" evidence="2">
    <location>
        <begin position="228"/>
        <end position="231"/>
    </location>
</feature>
<feature type="helix" evidence="2">
    <location>
        <begin position="233"/>
        <end position="242"/>
    </location>
</feature>
<feature type="helix" evidence="2">
    <location>
        <begin position="244"/>
        <end position="254"/>
    </location>
</feature>
<proteinExistence type="evidence at protein level"/>
<reference key="1">
    <citation type="journal article" date="2000" name="Nature">
        <title>The genome sequence of the food-borne pathogen Campylobacter jejuni reveals hypervariable sequences.</title>
        <authorList>
            <person name="Parkhill J."/>
            <person name="Wren B.W."/>
            <person name="Mungall K.L."/>
            <person name="Ketley J.M."/>
            <person name="Churcher C.M."/>
            <person name="Basham D."/>
            <person name="Chillingworth T."/>
            <person name="Davies R.M."/>
            <person name="Feltwell T."/>
            <person name="Holroyd S."/>
            <person name="Jagels K."/>
            <person name="Karlyshev A.V."/>
            <person name="Moule S."/>
            <person name="Pallen M.J."/>
            <person name="Penn C.W."/>
            <person name="Quail M.A."/>
            <person name="Rajandream M.A."/>
            <person name="Rutherford K.M."/>
            <person name="van Vliet A.H.M."/>
            <person name="Whitehead S."/>
            <person name="Barrell B.G."/>
        </authorList>
    </citation>
    <scope>NUCLEOTIDE SEQUENCE [LARGE SCALE GENOMIC DNA]</scope>
    <source>
        <strain>ATCC 700819 / NCTC 11168</strain>
    </source>
</reference>
<evidence type="ECO:0000255" key="1">
    <source>
        <dbReference type="HAMAP-Rule" id="MF_00279"/>
    </source>
</evidence>
<evidence type="ECO:0007829" key="2">
    <source>
        <dbReference type="PDB" id="3O6C"/>
    </source>
</evidence>
<gene>
    <name evidence="1" type="primary">pdxJ</name>
    <name type="ordered locus">Cj1238</name>
</gene>
<keyword id="KW-0002">3D-structure</keyword>
<keyword id="KW-0963">Cytoplasm</keyword>
<keyword id="KW-0664">Pyridoxine biosynthesis</keyword>
<keyword id="KW-1185">Reference proteome</keyword>
<keyword id="KW-0808">Transferase</keyword>
<sequence length="257" mass="29011">MLLGVNIDHIAVLRQARMVNDPDLLEAAFIVARHGDQITLHVREDRRHAQDFDLENIIKFCKSPVNLECALNDEILNLALKLKPHRVTLVPEKREELTTEGGLCLNHAKLKQSIEKLQNANIEVSLFINPSLEDIEKSKILKAQFIELHTGHYANLHNALFSNISHTAFALKELDQDKKTLQAQFEKELQNLELCAKKGLELGLKVAAGHGLNYKNVKPVVKIKEICELNIGQSIVARSVFTGLQNAILEMKELIKR</sequence>